<organism>
    <name type="scientific">Bacillus subtilis (strain 168)</name>
    <dbReference type="NCBI Taxonomy" id="224308"/>
    <lineage>
        <taxon>Bacteria</taxon>
        <taxon>Bacillati</taxon>
        <taxon>Bacillota</taxon>
        <taxon>Bacilli</taxon>
        <taxon>Bacillales</taxon>
        <taxon>Bacillaceae</taxon>
        <taxon>Bacillus</taxon>
    </lineage>
</organism>
<keyword id="KW-0238">DNA-binding</keyword>
<keyword id="KW-1185">Reference proteome</keyword>
<keyword id="KW-0731">Sigma factor</keyword>
<keyword id="KW-0804">Transcription</keyword>
<keyword id="KW-0805">Transcription regulation</keyword>
<feature type="chain" id="PRO_0000248952" description="RNA polymerase sigma factor YlaC">
    <location>
        <begin position="1"/>
        <end position="173"/>
    </location>
</feature>
<gene>
    <name type="primary">ylaC</name>
    <name type="ordered locus">BSU14730</name>
</gene>
<proteinExistence type="evidence at transcript level"/>
<dbReference type="EMBL" id="Z97025">
    <property type="protein sequence ID" value="CAB09708.1"/>
    <property type="molecule type" value="Genomic_DNA"/>
</dbReference>
<dbReference type="EMBL" id="AL009126">
    <property type="protein sequence ID" value="CAB13346.1"/>
    <property type="molecule type" value="Genomic_DNA"/>
</dbReference>
<dbReference type="PIR" id="A69872">
    <property type="entry name" value="A69872"/>
</dbReference>
<dbReference type="RefSeq" id="WP_003245485.1">
    <property type="nucleotide sequence ID" value="NZ_OZ025638.1"/>
</dbReference>
<dbReference type="SMR" id="O07627"/>
<dbReference type="FunCoup" id="O07627">
    <property type="interactions" value="143"/>
</dbReference>
<dbReference type="STRING" id="224308.BSU14730"/>
<dbReference type="PaxDb" id="224308-BSU14730"/>
<dbReference type="EnsemblBacteria" id="CAB13346">
    <property type="protein sequence ID" value="CAB13346"/>
    <property type="gene ID" value="BSU_14730"/>
</dbReference>
<dbReference type="GeneID" id="935973"/>
<dbReference type="KEGG" id="bsu:BSU14730"/>
<dbReference type="PATRIC" id="fig|224308.179.peg.1607"/>
<dbReference type="eggNOG" id="COG1595">
    <property type="taxonomic scope" value="Bacteria"/>
</dbReference>
<dbReference type="InParanoid" id="O07627"/>
<dbReference type="OrthoDB" id="9795666at2"/>
<dbReference type="PhylomeDB" id="O07627"/>
<dbReference type="BioCyc" id="BSUB:BSU14730-MONOMER"/>
<dbReference type="Proteomes" id="UP000001570">
    <property type="component" value="Chromosome"/>
</dbReference>
<dbReference type="GO" id="GO:0003677">
    <property type="term" value="F:DNA binding"/>
    <property type="evidence" value="ECO:0007669"/>
    <property type="project" value="UniProtKB-KW"/>
</dbReference>
<dbReference type="GO" id="GO:0016987">
    <property type="term" value="F:sigma factor activity"/>
    <property type="evidence" value="ECO:0000318"/>
    <property type="project" value="GO_Central"/>
</dbReference>
<dbReference type="GO" id="GO:0006352">
    <property type="term" value="P:DNA-templated transcription initiation"/>
    <property type="evidence" value="ECO:0007669"/>
    <property type="project" value="InterPro"/>
</dbReference>
<dbReference type="GO" id="GO:0006355">
    <property type="term" value="P:regulation of DNA-templated transcription"/>
    <property type="evidence" value="ECO:0000318"/>
    <property type="project" value="GO_Central"/>
</dbReference>
<dbReference type="CDD" id="cd06171">
    <property type="entry name" value="Sigma70_r4"/>
    <property type="match status" value="1"/>
</dbReference>
<dbReference type="Gene3D" id="1.10.1740.10">
    <property type="match status" value="1"/>
</dbReference>
<dbReference type="Gene3D" id="1.10.10.10">
    <property type="entry name" value="Winged helix-like DNA-binding domain superfamily/Winged helix DNA-binding domain"/>
    <property type="match status" value="1"/>
</dbReference>
<dbReference type="InterPro" id="IPR039425">
    <property type="entry name" value="RNA_pol_sigma-70-like"/>
</dbReference>
<dbReference type="InterPro" id="IPR014284">
    <property type="entry name" value="RNA_pol_sigma-70_dom"/>
</dbReference>
<dbReference type="InterPro" id="IPR014296">
    <property type="entry name" value="RNA_pol_sigma-M_bacilli"/>
</dbReference>
<dbReference type="InterPro" id="IPR007627">
    <property type="entry name" value="RNA_pol_sigma70_r2"/>
</dbReference>
<dbReference type="InterPro" id="IPR013249">
    <property type="entry name" value="RNA_pol_sigma70_r4_t2"/>
</dbReference>
<dbReference type="InterPro" id="IPR013325">
    <property type="entry name" value="RNA_pol_sigma_r2"/>
</dbReference>
<dbReference type="InterPro" id="IPR013324">
    <property type="entry name" value="RNA_pol_sigma_r3/r4-like"/>
</dbReference>
<dbReference type="InterPro" id="IPR036388">
    <property type="entry name" value="WH-like_DNA-bd_sf"/>
</dbReference>
<dbReference type="NCBIfam" id="TIGR02950">
    <property type="entry name" value="SigM_subfam"/>
    <property type="match status" value="1"/>
</dbReference>
<dbReference type="NCBIfam" id="TIGR02937">
    <property type="entry name" value="sigma70-ECF"/>
    <property type="match status" value="1"/>
</dbReference>
<dbReference type="PANTHER" id="PTHR43133:SF52">
    <property type="entry name" value="ECF RNA POLYMERASE SIGMA FACTOR SIGL"/>
    <property type="match status" value="1"/>
</dbReference>
<dbReference type="PANTHER" id="PTHR43133">
    <property type="entry name" value="RNA POLYMERASE ECF-TYPE SIGMA FACTO"/>
    <property type="match status" value="1"/>
</dbReference>
<dbReference type="Pfam" id="PF04542">
    <property type="entry name" value="Sigma70_r2"/>
    <property type="match status" value="1"/>
</dbReference>
<dbReference type="Pfam" id="PF08281">
    <property type="entry name" value="Sigma70_r4_2"/>
    <property type="match status" value="1"/>
</dbReference>
<dbReference type="SUPFAM" id="SSF88946">
    <property type="entry name" value="Sigma2 domain of RNA polymerase sigma factors"/>
    <property type="match status" value="1"/>
</dbReference>
<dbReference type="SUPFAM" id="SSF88659">
    <property type="entry name" value="Sigma3 and sigma4 domains of RNA polymerase sigma factors"/>
    <property type="match status" value="1"/>
</dbReference>
<comment type="function">
    <text evidence="1">Sigma factors are initiation factors that promote the attachment of RNA polymerase to specific initiation sites and are then released. This sigma factor contributes to oxidative stress resistance.</text>
</comment>
<comment type="induction">
    <text>By hydrogen peroxide.</text>
</comment>
<comment type="miscellaneous">
    <text>The interaction between YlaC and YlaD may be regulated by the redox state of YlaD.</text>
</comment>
<comment type="similarity">
    <text evidence="2">Belongs to the sigma-70 factor family. ECF subfamily.</text>
</comment>
<sequence>MKHRDSIEDLYRQYYQEILNYLFRRTHHLETAKDLAQDTFVKALNGLASFRGHSSIRTWLYTIAHHTFINWYRRDVKYQFTEISKNEGLTQTTYDQPEQYLSRTVKSETLRQELLKLKDQHQSVLILREFQELSYEEIAEILGWSLSKVNTTLHRARLELKKNMTKSREEERI</sequence>
<reference key="1">
    <citation type="journal article" date="1997" name="Nature">
        <title>The complete genome sequence of the Gram-positive bacterium Bacillus subtilis.</title>
        <authorList>
            <person name="Kunst F."/>
            <person name="Ogasawara N."/>
            <person name="Moszer I."/>
            <person name="Albertini A.M."/>
            <person name="Alloni G."/>
            <person name="Azevedo V."/>
            <person name="Bertero M.G."/>
            <person name="Bessieres P."/>
            <person name="Bolotin A."/>
            <person name="Borchert S."/>
            <person name="Borriss R."/>
            <person name="Boursier L."/>
            <person name="Brans A."/>
            <person name="Braun M."/>
            <person name="Brignell S.C."/>
            <person name="Bron S."/>
            <person name="Brouillet S."/>
            <person name="Bruschi C.V."/>
            <person name="Caldwell B."/>
            <person name="Capuano V."/>
            <person name="Carter N.M."/>
            <person name="Choi S.-K."/>
            <person name="Codani J.-J."/>
            <person name="Connerton I.F."/>
            <person name="Cummings N.J."/>
            <person name="Daniel R.A."/>
            <person name="Denizot F."/>
            <person name="Devine K.M."/>
            <person name="Duesterhoeft A."/>
            <person name="Ehrlich S.D."/>
            <person name="Emmerson P.T."/>
            <person name="Entian K.-D."/>
            <person name="Errington J."/>
            <person name="Fabret C."/>
            <person name="Ferrari E."/>
            <person name="Foulger D."/>
            <person name="Fritz C."/>
            <person name="Fujita M."/>
            <person name="Fujita Y."/>
            <person name="Fuma S."/>
            <person name="Galizzi A."/>
            <person name="Galleron N."/>
            <person name="Ghim S.-Y."/>
            <person name="Glaser P."/>
            <person name="Goffeau A."/>
            <person name="Golightly E.J."/>
            <person name="Grandi G."/>
            <person name="Guiseppi G."/>
            <person name="Guy B.J."/>
            <person name="Haga K."/>
            <person name="Haiech J."/>
            <person name="Harwood C.R."/>
            <person name="Henaut A."/>
            <person name="Hilbert H."/>
            <person name="Holsappel S."/>
            <person name="Hosono S."/>
            <person name="Hullo M.-F."/>
            <person name="Itaya M."/>
            <person name="Jones L.-M."/>
            <person name="Joris B."/>
            <person name="Karamata D."/>
            <person name="Kasahara Y."/>
            <person name="Klaerr-Blanchard M."/>
            <person name="Klein C."/>
            <person name="Kobayashi Y."/>
            <person name="Koetter P."/>
            <person name="Koningstein G."/>
            <person name="Krogh S."/>
            <person name="Kumano M."/>
            <person name="Kurita K."/>
            <person name="Lapidus A."/>
            <person name="Lardinois S."/>
            <person name="Lauber J."/>
            <person name="Lazarevic V."/>
            <person name="Lee S.-M."/>
            <person name="Levine A."/>
            <person name="Liu H."/>
            <person name="Masuda S."/>
            <person name="Mauel C."/>
            <person name="Medigue C."/>
            <person name="Medina N."/>
            <person name="Mellado R.P."/>
            <person name="Mizuno M."/>
            <person name="Moestl D."/>
            <person name="Nakai S."/>
            <person name="Noback M."/>
            <person name="Noone D."/>
            <person name="O'Reilly M."/>
            <person name="Ogawa K."/>
            <person name="Ogiwara A."/>
            <person name="Oudega B."/>
            <person name="Park S.-H."/>
            <person name="Parro V."/>
            <person name="Pohl T.M."/>
            <person name="Portetelle D."/>
            <person name="Porwollik S."/>
            <person name="Prescott A.M."/>
            <person name="Presecan E."/>
            <person name="Pujic P."/>
            <person name="Purnelle B."/>
            <person name="Rapoport G."/>
            <person name="Rey M."/>
            <person name="Reynolds S."/>
            <person name="Rieger M."/>
            <person name="Rivolta C."/>
            <person name="Rocha E."/>
            <person name="Roche B."/>
            <person name="Rose M."/>
            <person name="Sadaie Y."/>
            <person name="Sato T."/>
            <person name="Scanlan E."/>
            <person name="Schleich S."/>
            <person name="Schroeter R."/>
            <person name="Scoffone F."/>
            <person name="Sekiguchi J."/>
            <person name="Sekowska A."/>
            <person name="Seror S.J."/>
            <person name="Serror P."/>
            <person name="Shin B.-S."/>
            <person name="Soldo B."/>
            <person name="Sorokin A."/>
            <person name="Tacconi E."/>
            <person name="Takagi T."/>
            <person name="Takahashi H."/>
            <person name="Takemaru K."/>
            <person name="Takeuchi M."/>
            <person name="Tamakoshi A."/>
            <person name="Tanaka T."/>
            <person name="Terpstra P."/>
            <person name="Tognoni A."/>
            <person name="Tosato V."/>
            <person name="Uchiyama S."/>
            <person name="Vandenbol M."/>
            <person name="Vannier F."/>
            <person name="Vassarotti A."/>
            <person name="Viari A."/>
            <person name="Wambutt R."/>
            <person name="Wedler E."/>
            <person name="Wedler H."/>
            <person name="Weitzenegger T."/>
            <person name="Winters P."/>
            <person name="Wipat A."/>
            <person name="Yamamoto H."/>
            <person name="Yamane K."/>
            <person name="Yasumoto K."/>
            <person name="Yata K."/>
            <person name="Yoshida K."/>
            <person name="Yoshikawa H.-F."/>
            <person name="Zumstein E."/>
            <person name="Yoshikawa H."/>
            <person name="Danchin A."/>
        </authorList>
    </citation>
    <scope>NUCLEOTIDE SEQUENCE [LARGE SCALE GENOMIC DNA]</scope>
    <source>
        <strain>168</strain>
    </source>
</reference>
<reference key="2">
    <citation type="journal article" date="2006" name="J. Microbiol.">
        <title>YlaC is an extracytoplasmic function (ECF) sigma factor contributing to hydrogen peroxide resistance in Bacillus subtilis.</title>
        <authorList>
            <person name="Ryu H.-B."/>
            <person name="Shin I."/>
            <person name="Yim H.-S."/>
            <person name="Kang S.-O."/>
        </authorList>
    </citation>
    <scope>FUNCTION</scope>
</reference>
<name>YLAC_BACSU</name>
<evidence type="ECO:0000269" key="1">
    <source>
    </source>
</evidence>
<evidence type="ECO:0000305" key="2"/>
<accession>O07627</accession>
<accession>Q796J4</accession>
<protein>
    <recommendedName>
        <fullName>RNA polymerase sigma factor YlaC</fullName>
    </recommendedName>
</protein>